<organism>
    <name type="scientific">Lactococcus lactis subsp. cremoris (strain MG1363)</name>
    <dbReference type="NCBI Taxonomy" id="416870"/>
    <lineage>
        <taxon>Bacteria</taxon>
        <taxon>Bacillati</taxon>
        <taxon>Bacillota</taxon>
        <taxon>Bacilli</taxon>
        <taxon>Lactobacillales</taxon>
        <taxon>Streptococcaceae</taxon>
        <taxon>Lactococcus</taxon>
        <taxon>Lactococcus cremoris subsp. cremoris</taxon>
    </lineage>
</organism>
<gene>
    <name evidence="1" type="primary">xseB</name>
    <name type="ordered locus">llmg_1691</name>
</gene>
<reference key="1">
    <citation type="journal article" date="2007" name="J. Bacteriol.">
        <title>The complete genome sequence of the lactic acid bacterial paradigm Lactococcus lactis subsp. cremoris MG1363.</title>
        <authorList>
            <person name="Wegmann U."/>
            <person name="O'Connell-Motherway M."/>
            <person name="Zomer A."/>
            <person name="Buist G."/>
            <person name="Shearman C."/>
            <person name="Canchaya C."/>
            <person name="Ventura M."/>
            <person name="Goesmann A."/>
            <person name="Gasson M.J."/>
            <person name="Kuipers O.P."/>
            <person name="van Sinderen D."/>
            <person name="Kok J."/>
        </authorList>
    </citation>
    <scope>NUCLEOTIDE SEQUENCE [LARGE SCALE GENOMIC DNA]</scope>
    <source>
        <strain>MG1363</strain>
    </source>
</reference>
<dbReference type="EC" id="3.1.11.6" evidence="1"/>
<dbReference type="EMBL" id="AM406671">
    <property type="protein sequence ID" value="CAL98265.1"/>
    <property type="molecule type" value="Genomic_DNA"/>
</dbReference>
<dbReference type="RefSeq" id="WP_011835497.1">
    <property type="nucleotide sequence ID" value="NC_009004.1"/>
</dbReference>
<dbReference type="SMR" id="A2RLU3"/>
<dbReference type="STRING" id="416870.llmg_1691"/>
<dbReference type="GeneID" id="61109137"/>
<dbReference type="KEGG" id="llm:llmg_1691"/>
<dbReference type="eggNOG" id="COG1722">
    <property type="taxonomic scope" value="Bacteria"/>
</dbReference>
<dbReference type="HOGENOM" id="CLU_145918_3_2_9"/>
<dbReference type="OrthoDB" id="9798666at2"/>
<dbReference type="PhylomeDB" id="A2RLU3"/>
<dbReference type="Proteomes" id="UP000000364">
    <property type="component" value="Chromosome"/>
</dbReference>
<dbReference type="GO" id="GO:0005829">
    <property type="term" value="C:cytosol"/>
    <property type="evidence" value="ECO:0007669"/>
    <property type="project" value="TreeGrafter"/>
</dbReference>
<dbReference type="GO" id="GO:0009318">
    <property type="term" value="C:exodeoxyribonuclease VII complex"/>
    <property type="evidence" value="ECO:0007669"/>
    <property type="project" value="InterPro"/>
</dbReference>
<dbReference type="GO" id="GO:0008855">
    <property type="term" value="F:exodeoxyribonuclease VII activity"/>
    <property type="evidence" value="ECO:0007669"/>
    <property type="project" value="UniProtKB-UniRule"/>
</dbReference>
<dbReference type="GO" id="GO:0006308">
    <property type="term" value="P:DNA catabolic process"/>
    <property type="evidence" value="ECO:0007669"/>
    <property type="project" value="UniProtKB-UniRule"/>
</dbReference>
<dbReference type="Gene3D" id="1.10.287.1040">
    <property type="entry name" value="Exonuclease VII, small subunit"/>
    <property type="match status" value="1"/>
</dbReference>
<dbReference type="HAMAP" id="MF_00337">
    <property type="entry name" value="Exonuc_7_S"/>
    <property type="match status" value="1"/>
</dbReference>
<dbReference type="InterPro" id="IPR003761">
    <property type="entry name" value="Exonuc_VII_S"/>
</dbReference>
<dbReference type="InterPro" id="IPR037004">
    <property type="entry name" value="Exonuc_VII_ssu_sf"/>
</dbReference>
<dbReference type="NCBIfam" id="NF002138">
    <property type="entry name" value="PRK00977.1-2"/>
    <property type="match status" value="1"/>
</dbReference>
<dbReference type="NCBIfam" id="TIGR01280">
    <property type="entry name" value="xseB"/>
    <property type="match status" value="1"/>
</dbReference>
<dbReference type="PANTHER" id="PTHR34137">
    <property type="entry name" value="EXODEOXYRIBONUCLEASE 7 SMALL SUBUNIT"/>
    <property type="match status" value="1"/>
</dbReference>
<dbReference type="PANTHER" id="PTHR34137:SF1">
    <property type="entry name" value="EXODEOXYRIBONUCLEASE 7 SMALL SUBUNIT"/>
    <property type="match status" value="1"/>
</dbReference>
<dbReference type="Pfam" id="PF02609">
    <property type="entry name" value="Exonuc_VII_S"/>
    <property type="match status" value="1"/>
</dbReference>
<dbReference type="PIRSF" id="PIRSF006488">
    <property type="entry name" value="Exonuc_VII_S"/>
    <property type="match status" value="1"/>
</dbReference>
<dbReference type="SUPFAM" id="SSF116842">
    <property type="entry name" value="XseB-like"/>
    <property type="match status" value="1"/>
</dbReference>
<feature type="chain" id="PRO_0000303718" description="Exodeoxyribonuclease 7 small subunit">
    <location>
        <begin position="1"/>
        <end position="79"/>
    </location>
</feature>
<evidence type="ECO:0000255" key="1">
    <source>
        <dbReference type="HAMAP-Rule" id="MF_00337"/>
    </source>
</evidence>
<protein>
    <recommendedName>
        <fullName evidence="1">Exodeoxyribonuclease 7 small subunit</fullName>
        <ecNumber evidence="1">3.1.11.6</ecNumber>
    </recommendedName>
    <alternativeName>
        <fullName evidence="1">Exodeoxyribonuclease VII small subunit</fullName>
        <shortName evidence="1">Exonuclease VII small subunit</shortName>
    </alternativeName>
</protein>
<comment type="function">
    <text evidence="1">Bidirectionally degrades single-stranded DNA into large acid-insoluble oligonucleotides, which are then degraded further into small acid-soluble oligonucleotides.</text>
</comment>
<comment type="catalytic activity">
    <reaction evidence="1">
        <text>Exonucleolytic cleavage in either 5'- to 3'- or 3'- to 5'-direction to yield nucleoside 5'-phosphates.</text>
        <dbReference type="EC" id="3.1.11.6"/>
    </reaction>
</comment>
<comment type="subunit">
    <text evidence="1">Heterooligomer composed of large and small subunits.</text>
</comment>
<comment type="subcellular location">
    <subcellularLocation>
        <location evidence="1">Cytoplasm</location>
    </subcellularLocation>
</comment>
<comment type="similarity">
    <text evidence="1">Belongs to the XseB family.</text>
</comment>
<accession>A2RLU3</accession>
<name>EX7S_LACLM</name>
<sequence length="79" mass="8966">MATKKEEVKFEDNLAELENIVRKLESGDVALEDAIAEFQKGMKISETLKKTLNEAEQTLVKIVGKDDNESEFSAEQKEY</sequence>
<proteinExistence type="inferred from homology"/>
<keyword id="KW-0963">Cytoplasm</keyword>
<keyword id="KW-0269">Exonuclease</keyword>
<keyword id="KW-0378">Hydrolase</keyword>
<keyword id="KW-0540">Nuclease</keyword>